<keyword id="KW-0030">Aminoacyl-tRNA synthetase</keyword>
<keyword id="KW-0067">ATP-binding</keyword>
<keyword id="KW-0963">Cytoplasm</keyword>
<keyword id="KW-0436">Ligase</keyword>
<keyword id="KW-0479">Metal-binding</keyword>
<keyword id="KW-0547">Nucleotide-binding</keyword>
<keyword id="KW-0648">Protein biosynthesis</keyword>
<keyword id="KW-1185">Reference proteome</keyword>
<keyword id="KW-0862">Zinc</keyword>
<protein>
    <recommendedName>
        <fullName evidence="1">Methionine--tRNA ligase</fullName>
        <ecNumber evidence="1">6.1.1.10</ecNumber>
    </recommendedName>
    <alternativeName>
        <fullName evidence="1">Methionyl-tRNA synthetase</fullName>
        <shortName evidence="1">MetRS</shortName>
    </alternativeName>
</protein>
<comment type="function">
    <text evidence="1">Is required not only for elongation of protein synthesis but also for the initiation of all mRNA translation through initiator tRNA(fMet) aminoacylation.</text>
</comment>
<comment type="catalytic activity">
    <reaction evidence="1">
        <text>tRNA(Met) + L-methionine + ATP = L-methionyl-tRNA(Met) + AMP + diphosphate</text>
        <dbReference type="Rhea" id="RHEA:13481"/>
        <dbReference type="Rhea" id="RHEA-COMP:9667"/>
        <dbReference type="Rhea" id="RHEA-COMP:9698"/>
        <dbReference type="ChEBI" id="CHEBI:30616"/>
        <dbReference type="ChEBI" id="CHEBI:33019"/>
        <dbReference type="ChEBI" id="CHEBI:57844"/>
        <dbReference type="ChEBI" id="CHEBI:78442"/>
        <dbReference type="ChEBI" id="CHEBI:78530"/>
        <dbReference type="ChEBI" id="CHEBI:456215"/>
        <dbReference type="EC" id="6.1.1.10"/>
    </reaction>
</comment>
<comment type="cofactor">
    <cofactor evidence="1">
        <name>Zn(2+)</name>
        <dbReference type="ChEBI" id="CHEBI:29105"/>
    </cofactor>
    <text evidence="1">Binds 1 zinc ion per subunit.</text>
</comment>
<comment type="subcellular location">
    <subcellularLocation>
        <location evidence="1">Cytoplasm</location>
    </subcellularLocation>
</comment>
<comment type="similarity">
    <text evidence="1">Belongs to the class-I aminoacyl-tRNA synthetase family. MetG type 1 subfamily.</text>
</comment>
<evidence type="ECO:0000255" key="1">
    <source>
        <dbReference type="HAMAP-Rule" id="MF_00098"/>
    </source>
</evidence>
<accession>B1L7J9</accession>
<reference key="1">
    <citation type="journal article" date="2008" name="Proc. Natl. Acad. Sci. U.S.A.">
        <title>A korarchaeal genome reveals new insights into the evolution of the Archaea.</title>
        <authorList>
            <person name="Elkins J.G."/>
            <person name="Podar M."/>
            <person name="Graham D.E."/>
            <person name="Makarova K.S."/>
            <person name="Wolf Y."/>
            <person name="Randau L."/>
            <person name="Hedlund B.P."/>
            <person name="Brochier-Armanet C."/>
            <person name="Kunin V."/>
            <person name="Anderson I."/>
            <person name="Lapidus A."/>
            <person name="Goltsman E."/>
            <person name="Barry K."/>
            <person name="Koonin E.V."/>
            <person name="Hugenholtz P."/>
            <person name="Kyrpides N."/>
            <person name="Wanner G."/>
            <person name="Richardson P."/>
            <person name="Keller M."/>
            <person name="Stetter K.O."/>
        </authorList>
    </citation>
    <scope>NUCLEOTIDE SEQUENCE [LARGE SCALE GENOMIC DNA]</scope>
    <source>
        <strain>OPF8</strain>
    </source>
</reference>
<dbReference type="EC" id="6.1.1.10" evidence="1"/>
<dbReference type="EMBL" id="CP000968">
    <property type="protein sequence ID" value="ACB06826.1"/>
    <property type="molecule type" value="Genomic_DNA"/>
</dbReference>
<dbReference type="RefSeq" id="WP_012308723.1">
    <property type="nucleotide sequence ID" value="NC_010482.1"/>
</dbReference>
<dbReference type="SMR" id="B1L7J9"/>
<dbReference type="FunCoup" id="B1L7J9">
    <property type="interactions" value="235"/>
</dbReference>
<dbReference type="STRING" id="374847.Kcr_0066"/>
<dbReference type="EnsemblBacteria" id="ACB06826">
    <property type="protein sequence ID" value="ACB06826"/>
    <property type="gene ID" value="Kcr_0066"/>
</dbReference>
<dbReference type="GeneID" id="6093355"/>
<dbReference type="KEGG" id="kcr:Kcr_0066"/>
<dbReference type="eggNOG" id="arCOG00810">
    <property type="taxonomic scope" value="Archaea"/>
</dbReference>
<dbReference type="HOGENOM" id="CLU_009710_1_2_2"/>
<dbReference type="InParanoid" id="B1L7J9"/>
<dbReference type="OrthoDB" id="371856at2157"/>
<dbReference type="PhylomeDB" id="B1L7J9"/>
<dbReference type="Proteomes" id="UP000001686">
    <property type="component" value="Chromosome"/>
</dbReference>
<dbReference type="GO" id="GO:0017101">
    <property type="term" value="C:aminoacyl-tRNA synthetase multienzyme complex"/>
    <property type="evidence" value="ECO:0000318"/>
    <property type="project" value="GO_Central"/>
</dbReference>
<dbReference type="GO" id="GO:0005829">
    <property type="term" value="C:cytosol"/>
    <property type="evidence" value="ECO:0000318"/>
    <property type="project" value="GO_Central"/>
</dbReference>
<dbReference type="GO" id="GO:0005524">
    <property type="term" value="F:ATP binding"/>
    <property type="evidence" value="ECO:0007669"/>
    <property type="project" value="UniProtKB-UniRule"/>
</dbReference>
<dbReference type="GO" id="GO:0046872">
    <property type="term" value="F:metal ion binding"/>
    <property type="evidence" value="ECO:0007669"/>
    <property type="project" value="UniProtKB-KW"/>
</dbReference>
<dbReference type="GO" id="GO:0004825">
    <property type="term" value="F:methionine-tRNA ligase activity"/>
    <property type="evidence" value="ECO:0000318"/>
    <property type="project" value="GO_Central"/>
</dbReference>
<dbReference type="GO" id="GO:0006431">
    <property type="term" value="P:methionyl-tRNA aminoacylation"/>
    <property type="evidence" value="ECO:0000318"/>
    <property type="project" value="GO_Central"/>
</dbReference>
<dbReference type="CDD" id="cd07957">
    <property type="entry name" value="Anticodon_Ia_Met"/>
    <property type="match status" value="1"/>
</dbReference>
<dbReference type="CDD" id="cd00814">
    <property type="entry name" value="MetRS_core"/>
    <property type="match status" value="1"/>
</dbReference>
<dbReference type="FunFam" id="2.20.28.20:FF:000001">
    <property type="entry name" value="Methionine--tRNA ligase"/>
    <property type="match status" value="1"/>
</dbReference>
<dbReference type="Gene3D" id="3.40.50.620">
    <property type="entry name" value="HUPs"/>
    <property type="match status" value="1"/>
</dbReference>
<dbReference type="Gene3D" id="1.10.730.10">
    <property type="entry name" value="Isoleucyl-tRNA Synthetase, Domain 1"/>
    <property type="match status" value="1"/>
</dbReference>
<dbReference type="Gene3D" id="2.20.28.20">
    <property type="entry name" value="Methionyl-tRNA synthetase, Zn-domain"/>
    <property type="match status" value="1"/>
</dbReference>
<dbReference type="HAMAP" id="MF_00098">
    <property type="entry name" value="Met_tRNA_synth_type1"/>
    <property type="match status" value="1"/>
</dbReference>
<dbReference type="InterPro" id="IPR001412">
    <property type="entry name" value="aa-tRNA-synth_I_CS"/>
</dbReference>
<dbReference type="InterPro" id="IPR041872">
    <property type="entry name" value="Anticodon_Met"/>
</dbReference>
<dbReference type="InterPro" id="IPR023458">
    <property type="entry name" value="Met-tRNA_ligase_1"/>
</dbReference>
<dbReference type="InterPro" id="IPR014758">
    <property type="entry name" value="Met-tRNA_synth"/>
</dbReference>
<dbReference type="InterPro" id="IPR015413">
    <property type="entry name" value="Methionyl/Leucyl_tRNA_Synth"/>
</dbReference>
<dbReference type="InterPro" id="IPR033911">
    <property type="entry name" value="MetRS_core"/>
</dbReference>
<dbReference type="InterPro" id="IPR029038">
    <property type="entry name" value="MetRS_Zn"/>
</dbReference>
<dbReference type="InterPro" id="IPR014729">
    <property type="entry name" value="Rossmann-like_a/b/a_fold"/>
</dbReference>
<dbReference type="InterPro" id="IPR009080">
    <property type="entry name" value="tRNAsynth_Ia_anticodon-bd"/>
</dbReference>
<dbReference type="NCBIfam" id="TIGR00398">
    <property type="entry name" value="metG"/>
    <property type="match status" value="1"/>
</dbReference>
<dbReference type="NCBIfam" id="NF001100">
    <property type="entry name" value="PRK00133.1"/>
    <property type="match status" value="1"/>
</dbReference>
<dbReference type="PANTHER" id="PTHR45765">
    <property type="entry name" value="METHIONINE--TRNA LIGASE"/>
    <property type="match status" value="1"/>
</dbReference>
<dbReference type="PANTHER" id="PTHR45765:SF1">
    <property type="entry name" value="METHIONINE--TRNA LIGASE, CYTOPLASMIC"/>
    <property type="match status" value="1"/>
</dbReference>
<dbReference type="Pfam" id="PF19303">
    <property type="entry name" value="Anticodon_3"/>
    <property type="match status" value="1"/>
</dbReference>
<dbReference type="Pfam" id="PF09334">
    <property type="entry name" value="tRNA-synt_1g"/>
    <property type="match status" value="1"/>
</dbReference>
<dbReference type="PRINTS" id="PR01041">
    <property type="entry name" value="TRNASYNTHMET"/>
</dbReference>
<dbReference type="SUPFAM" id="SSF47323">
    <property type="entry name" value="Anticodon-binding domain of a subclass of class I aminoacyl-tRNA synthetases"/>
    <property type="match status" value="1"/>
</dbReference>
<dbReference type="SUPFAM" id="SSF57770">
    <property type="entry name" value="Methionyl-tRNA synthetase (MetRS), Zn-domain"/>
    <property type="match status" value="1"/>
</dbReference>
<dbReference type="SUPFAM" id="SSF52374">
    <property type="entry name" value="Nucleotidylyl transferase"/>
    <property type="match status" value="1"/>
</dbReference>
<dbReference type="PROSITE" id="PS00178">
    <property type="entry name" value="AA_TRNA_LIGASE_I"/>
    <property type="match status" value="1"/>
</dbReference>
<sequence length="559" mass="65152">MRWIVASAWPYINAVPHLGTLVQVLSSDVFARFLRKMGEEVVFVSGSDEHGTPIEIEAIRKGIAPRDLTDKMHAYITWLFESFGISYDNYTRTESDVHKEFVRDFYLKVYNEGHIFERETEQLYCPKDEMFLPDRFVTGTCPYCGYERAHGDQCDRCGRLLNPTDLIDPKCSICGSVPEMRRTKHWFFDLPKFSERLRKYIEENENLPENAKTLSLSMIEEGLRPRSLTRDNKWGIPAPFPGSEGKTIYVWMEAVLGYVSAVKEYFLKRGEAERFEEFWKSGDTRSVYFIGKDNIPFHTIIFPALLMASGEGYALPFSVASTEFLLYEGEKFSKSERRGIWMDEALQLLPADYWRFYMIYMRPELKDASFSWEDFESKVNDELNDTIGNLVHRILSFIASRYSGQIPSVELDEEASGFLMRVREIGREIEENLMKIKLRDALRSLIEMARLGNKFFNNREPWKDFESNRGRADSTILASYILLKILAFYMHIFMPSSAEKLWKMLGLEGEPEDRVAFSYHDNGKVSSLEPLFRKIKKEELINRLNQIRERGEVLSARES</sequence>
<proteinExistence type="inferred from homology"/>
<name>SYM_KORCO</name>
<feature type="chain" id="PRO_1000093717" description="Methionine--tRNA ligase">
    <location>
        <begin position="1"/>
        <end position="559"/>
    </location>
</feature>
<feature type="short sequence motif" description="'HIGH' region">
    <location>
        <begin position="10"/>
        <end position="20"/>
    </location>
</feature>
<feature type="short sequence motif" description="'KMSKS' region">
    <location>
        <begin position="331"/>
        <end position="335"/>
    </location>
</feature>
<feature type="binding site" evidence="1">
    <location>
        <position position="141"/>
    </location>
    <ligand>
        <name>Zn(2+)</name>
        <dbReference type="ChEBI" id="CHEBI:29105"/>
    </ligand>
</feature>
<feature type="binding site" evidence="1">
    <location>
        <position position="144"/>
    </location>
    <ligand>
        <name>Zn(2+)</name>
        <dbReference type="ChEBI" id="CHEBI:29105"/>
    </ligand>
</feature>
<feature type="binding site" evidence="1">
    <location>
        <position position="154"/>
    </location>
    <ligand>
        <name>Zn(2+)</name>
        <dbReference type="ChEBI" id="CHEBI:29105"/>
    </ligand>
</feature>
<feature type="binding site" evidence="1">
    <location>
        <position position="157"/>
    </location>
    <ligand>
        <name>Zn(2+)</name>
        <dbReference type="ChEBI" id="CHEBI:29105"/>
    </ligand>
</feature>
<feature type="binding site" evidence="1">
    <location>
        <position position="334"/>
    </location>
    <ligand>
        <name>ATP</name>
        <dbReference type="ChEBI" id="CHEBI:30616"/>
    </ligand>
</feature>
<organism>
    <name type="scientific">Korarchaeum cryptofilum (strain OPF8)</name>
    <dbReference type="NCBI Taxonomy" id="374847"/>
    <lineage>
        <taxon>Archaea</taxon>
        <taxon>Thermoproteota</taxon>
        <taxon>Candidatus Korarchaeia</taxon>
        <taxon>Candidatus Korarchaeales</taxon>
        <taxon>Candidatus Korarchaeaceae</taxon>
        <taxon>Candidatus Korarchaeum</taxon>
    </lineage>
</organism>
<gene>
    <name evidence="1" type="primary">metG</name>
    <name type="ordered locus">Kcr_0066</name>
</gene>